<keyword id="KW-0004">4Fe-4S</keyword>
<keyword id="KW-0150">Chloroplast</keyword>
<keyword id="KW-0408">Iron</keyword>
<keyword id="KW-0411">Iron-sulfur</keyword>
<keyword id="KW-0472">Membrane</keyword>
<keyword id="KW-0479">Metal-binding</keyword>
<keyword id="KW-0520">NAD</keyword>
<keyword id="KW-0521">NADP</keyword>
<keyword id="KW-0934">Plastid</keyword>
<keyword id="KW-0618">Plastoquinone</keyword>
<keyword id="KW-0874">Quinone</keyword>
<keyword id="KW-0677">Repeat</keyword>
<keyword id="KW-0793">Thylakoid</keyword>
<keyword id="KW-1278">Translocase</keyword>
<gene>
    <name evidence="1" type="primary">ndhI</name>
</gene>
<evidence type="ECO:0000255" key="1">
    <source>
        <dbReference type="HAMAP-Rule" id="MF_01351"/>
    </source>
</evidence>
<geneLocation type="chloroplast"/>
<feature type="chain" id="PRO_0000250764" description="NAD(P)H-quinone oxidoreductase subunit I, chloroplastic">
    <location>
        <begin position="1"/>
        <end position="166"/>
    </location>
</feature>
<feature type="domain" description="4Fe-4S ferredoxin-type 1" evidence="1">
    <location>
        <begin position="55"/>
        <end position="84"/>
    </location>
</feature>
<feature type="domain" description="4Fe-4S ferredoxin-type 2" evidence="1">
    <location>
        <begin position="95"/>
        <end position="124"/>
    </location>
</feature>
<feature type="binding site" evidence="1">
    <location>
        <position position="64"/>
    </location>
    <ligand>
        <name>[4Fe-4S] cluster</name>
        <dbReference type="ChEBI" id="CHEBI:49883"/>
        <label>1</label>
    </ligand>
</feature>
<feature type="binding site" evidence="1">
    <location>
        <position position="67"/>
    </location>
    <ligand>
        <name>[4Fe-4S] cluster</name>
        <dbReference type="ChEBI" id="CHEBI:49883"/>
        <label>1</label>
    </ligand>
</feature>
<feature type="binding site" evidence="1">
    <location>
        <position position="70"/>
    </location>
    <ligand>
        <name>[4Fe-4S] cluster</name>
        <dbReference type="ChEBI" id="CHEBI:49883"/>
        <label>1</label>
    </ligand>
</feature>
<feature type="binding site" evidence="1">
    <location>
        <position position="74"/>
    </location>
    <ligand>
        <name>[4Fe-4S] cluster</name>
        <dbReference type="ChEBI" id="CHEBI:49883"/>
        <label>2</label>
    </ligand>
</feature>
<feature type="binding site" evidence="1">
    <location>
        <position position="104"/>
    </location>
    <ligand>
        <name>[4Fe-4S] cluster</name>
        <dbReference type="ChEBI" id="CHEBI:49883"/>
        <label>2</label>
    </ligand>
</feature>
<feature type="binding site" evidence="1">
    <location>
        <position position="107"/>
    </location>
    <ligand>
        <name>[4Fe-4S] cluster</name>
        <dbReference type="ChEBI" id="CHEBI:49883"/>
        <label>2</label>
    </ligand>
</feature>
<feature type="binding site" evidence="1">
    <location>
        <position position="110"/>
    </location>
    <ligand>
        <name>[4Fe-4S] cluster</name>
        <dbReference type="ChEBI" id="CHEBI:49883"/>
        <label>2</label>
    </ligand>
</feature>
<feature type="binding site" evidence="1">
    <location>
        <position position="114"/>
    </location>
    <ligand>
        <name>[4Fe-4S] cluster</name>
        <dbReference type="ChEBI" id="CHEBI:49883"/>
        <label>1</label>
    </ligand>
</feature>
<dbReference type="EC" id="7.1.1.-" evidence="1"/>
<dbReference type="EMBL" id="AF383764">
    <property type="protein sequence ID" value="AAN61706.1"/>
    <property type="molecule type" value="Genomic_DNA"/>
</dbReference>
<dbReference type="SMR" id="Q8HVU8"/>
<dbReference type="GO" id="GO:0009535">
    <property type="term" value="C:chloroplast thylakoid membrane"/>
    <property type="evidence" value="ECO:0007669"/>
    <property type="project" value="UniProtKB-SubCell"/>
</dbReference>
<dbReference type="GO" id="GO:0051539">
    <property type="term" value="F:4 iron, 4 sulfur cluster binding"/>
    <property type="evidence" value="ECO:0007669"/>
    <property type="project" value="UniProtKB-KW"/>
</dbReference>
<dbReference type="GO" id="GO:0005506">
    <property type="term" value="F:iron ion binding"/>
    <property type="evidence" value="ECO:0007669"/>
    <property type="project" value="UniProtKB-UniRule"/>
</dbReference>
<dbReference type="GO" id="GO:0008137">
    <property type="term" value="F:NADH dehydrogenase (ubiquinone) activity"/>
    <property type="evidence" value="ECO:0007669"/>
    <property type="project" value="InterPro"/>
</dbReference>
<dbReference type="GO" id="GO:0048038">
    <property type="term" value="F:quinone binding"/>
    <property type="evidence" value="ECO:0007669"/>
    <property type="project" value="UniProtKB-KW"/>
</dbReference>
<dbReference type="GO" id="GO:0019684">
    <property type="term" value="P:photosynthesis, light reaction"/>
    <property type="evidence" value="ECO:0007669"/>
    <property type="project" value="UniProtKB-UniRule"/>
</dbReference>
<dbReference type="FunFam" id="3.30.70.3270:FF:000006">
    <property type="entry name" value="NAD(P)H-quinone oxidoreductase subunit I, chloroplastic"/>
    <property type="match status" value="1"/>
</dbReference>
<dbReference type="Gene3D" id="3.30.70.3270">
    <property type="match status" value="1"/>
</dbReference>
<dbReference type="HAMAP" id="MF_01351">
    <property type="entry name" value="NDH1_NuoI"/>
    <property type="match status" value="1"/>
</dbReference>
<dbReference type="InterPro" id="IPR017896">
    <property type="entry name" value="4Fe4S_Fe-S-bd"/>
</dbReference>
<dbReference type="InterPro" id="IPR017900">
    <property type="entry name" value="4Fe4S_Fe_S_CS"/>
</dbReference>
<dbReference type="InterPro" id="IPR010226">
    <property type="entry name" value="NADH_quinone_OxRdtase_chainI"/>
</dbReference>
<dbReference type="InterPro" id="IPR004497">
    <property type="entry name" value="NDHI"/>
</dbReference>
<dbReference type="NCBIfam" id="TIGR00403">
    <property type="entry name" value="ndhI"/>
    <property type="match status" value="1"/>
</dbReference>
<dbReference type="NCBIfam" id="TIGR01971">
    <property type="entry name" value="NuoI"/>
    <property type="match status" value="1"/>
</dbReference>
<dbReference type="NCBIfam" id="NF004537">
    <property type="entry name" value="PRK05888.1-3"/>
    <property type="match status" value="1"/>
</dbReference>
<dbReference type="PANTHER" id="PTHR47275">
    <property type="entry name" value="NAD(P)H-QUINONE OXIDOREDUCTASE SUBUNIT I, CHLOROPLASTIC"/>
    <property type="match status" value="1"/>
</dbReference>
<dbReference type="PANTHER" id="PTHR47275:SF1">
    <property type="entry name" value="NAD(P)H-QUINONE OXIDOREDUCTASE SUBUNIT I, CHLOROPLASTIC"/>
    <property type="match status" value="1"/>
</dbReference>
<dbReference type="Pfam" id="PF00037">
    <property type="entry name" value="Fer4"/>
    <property type="match status" value="2"/>
</dbReference>
<dbReference type="SUPFAM" id="SSF54862">
    <property type="entry name" value="4Fe-4S ferredoxins"/>
    <property type="match status" value="1"/>
</dbReference>
<dbReference type="PROSITE" id="PS00198">
    <property type="entry name" value="4FE4S_FER_1"/>
    <property type="match status" value="2"/>
</dbReference>
<dbReference type="PROSITE" id="PS51379">
    <property type="entry name" value="4FE4S_FER_2"/>
    <property type="match status" value="2"/>
</dbReference>
<proteinExistence type="inferred from homology"/>
<sequence length="166" mass="19518">MFPMVTEFMNYGQQTVRAARYIGQGFMITLSHANRLPVTIQYPYEKLITSERFRGRIHFEFDKCIACEVCVRVCPIDLPVVDWKLETDIRKKRLLNYSIDFGICIFCGNCVEYCPTNCLSMTEEYELSTYDRHELNYNQIALGRLPMSILDDYTIRTILNLPERKT</sequence>
<comment type="function">
    <text evidence="1">NDH shuttles electrons from NAD(P)H:plastoquinone, via FMN and iron-sulfur (Fe-S) centers, to quinones in the photosynthetic chain and possibly in a chloroplast respiratory chain. The immediate electron acceptor for the enzyme in this species is believed to be plastoquinone. Couples the redox reaction to proton translocation, and thus conserves the redox energy in a proton gradient.</text>
</comment>
<comment type="catalytic activity">
    <reaction evidence="1">
        <text>a plastoquinone + NADH + (n+1) H(+)(in) = a plastoquinol + NAD(+) + n H(+)(out)</text>
        <dbReference type="Rhea" id="RHEA:42608"/>
        <dbReference type="Rhea" id="RHEA-COMP:9561"/>
        <dbReference type="Rhea" id="RHEA-COMP:9562"/>
        <dbReference type="ChEBI" id="CHEBI:15378"/>
        <dbReference type="ChEBI" id="CHEBI:17757"/>
        <dbReference type="ChEBI" id="CHEBI:57540"/>
        <dbReference type="ChEBI" id="CHEBI:57945"/>
        <dbReference type="ChEBI" id="CHEBI:62192"/>
    </reaction>
</comment>
<comment type="catalytic activity">
    <reaction evidence="1">
        <text>a plastoquinone + NADPH + (n+1) H(+)(in) = a plastoquinol + NADP(+) + n H(+)(out)</text>
        <dbReference type="Rhea" id="RHEA:42612"/>
        <dbReference type="Rhea" id="RHEA-COMP:9561"/>
        <dbReference type="Rhea" id="RHEA-COMP:9562"/>
        <dbReference type="ChEBI" id="CHEBI:15378"/>
        <dbReference type="ChEBI" id="CHEBI:17757"/>
        <dbReference type="ChEBI" id="CHEBI:57783"/>
        <dbReference type="ChEBI" id="CHEBI:58349"/>
        <dbReference type="ChEBI" id="CHEBI:62192"/>
    </reaction>
</comment>
<comment type="cofactor">
    <cofactor evidence="1">
        <name>[4Fe-4S] cluster</name>
        <dbReference type="ChEBI" id="CHEBI:49883"/>
    </cofactor>
    <text evidence="1">Binds 2 [4Fe-4S] clusters per subunit.</text>
</comment>
<comment type="subunit">
    <text evidence="1">NDH is composed of at least 16 different subunits, 5 of which are encoded in the nucleus.</text>
</comment>
<comment type="subcellular location">
    <subcellularLocation>
        <location evidence="1">Plastid</location>
        <location evidence="1">Chloroplast thylakoid membrane</location>
        <topology evidence="1">Peripheral membrane protein</topology>
    </subcellularLocation>
</comment>
<comment type="similarity">
    <text evidence="1">Belongs to the complex I 23 kDa subunit family.</text>
</comment>
<organism>
    <name type="scientific">Chaetymenia peduncularis</name>
    <name type="common">Daisy</name>
    <dbReference type="NCBI Taxonomy" id="169567"/>
    <lineage>
        <taxon>Eukaryota</taxon>
        <taxon>Viridiplantae</taxon>
        <taxon>Streptophyta</taxon>
        <taxon>Embryophyta</taxon>
        <taxon>Tracheophyta</taxon>
        <taxon>Spermatophyta</taxon>
        <taxon>Magnoliopsida</taxon>
        <taxon>eudicotyledons</taxon>
        <taxon>Gunneridae</taxon>
        <taxon>Pentapetalae</taxon>
        <taxon>asterids</taxon>
        <taxon>campanulids</taxon>
        <taxon>Asterales</taxon>
        <taxon>Asteraceae</taxon>
        <taxon>Asteroideae</taxon>
        <taxon>Heliantheae alliance</taxon>
        <taxon>Bahieae</taxon>
        <taxon>Chaetymenia</taxon>
    </lineage>
</organism>
<name>NDHI_CHAPD</name>
<protein>
    <recommendedName>
        <fullName evidence="1">NAD(P)H-quinone oxidoreductase subunit I, chloroplastic</fullName>
        <ecNumber evidence="1">7.1.1.-</ecNumber>
    </recommendedName>
    <alternativeName>
        <fullName evidence="1">NAD(P)H dehydrogenase subunit I</fullName>
        <shortName evidence="1">NDH subunit I</shortName>
    </alternativeName>
    <alternativeName>
        <fullName evidence="1">NADH-plastoquinone oxidoreductase subunit I</fullName>
    </alternativeName>
</protein>
<reference key="1">
    <citation type="submission" date="2003-01" db="EMBL/GenBank/DDBJ databases">
        <title>Chloroplast DNA phylogeny of tribe Heliantheae (Asteraceae).</title>
        <authorList>
            <person name="Panero J.L."/>
            <person name="Baldwin B.G."/>
            <person name="Schilling E.E."/>
            <person name="Clevinger J.A."/>
        </authorList>
    </citation>
    <scope>NUCLEOTIDE SEQUENCE [GENOMIC DNA]</scope>
</reference>
<accession>Q8HVU8</accession>